<dbReference type="EMBL" id="AF530050">
    <property type="protein sequence ID" value="AAN01136.3"/>
    <property type="molecule type" value="mRNA"/>
</dbReference>
<dbReference type="EMBL" id="AY618264">
    <property type="protein sequence ID" value="AAT68665.1"/>
    <property type="molecule type" value="mRNA"/>
</dbReference>
<dbReference type="EMBL" id="BC066782">
    <property type="protein sequence ID" value="AAH66782.1"/>
    <property type="molecule type" value="mRNA"/>
</dbReference>
<dbReference type="CCDS" id="CCDS14894.1">
    <molecule id="Q6NY15-1"/>
</dbReference>
<dbReference type="CCDS" id="CCDS69883.1">
    <molecule id="Q6NY15-3"/>
</dbReference>
<dbReference type="CCDS" id="CCDS78571.1">
    <molecule id="Q6NY15-2"/>
</dbReference>
<dbReference type="RefSeq" id="NP_001277649.1">
    <molecule id="Q6NY15-3"/>
    <property type="nucleotide sequence ID" value="NM_001290720.1"/>
</dbReference>
<dbReference type="RefSeq" id="NP_001277650.1">
    <molecule id="Q6NY15-2"/>
    <property type="nucleotide sequence ID" value="NM_001290721.1"/>
</dbReference>
<dbReference type="RefSeq" id="NP_997111.1">
    <molecule id="Q6NY15-1"/>
    <property type="nucleotide sequence ID" value="NM_207228.3"/>
</dbReference>
<dbReference type="SMR" id="Q6NY15"/>
<dbReference type="BioGRID" id="229238">
    <property type="interactions" value="2"/>
</dbReference>
<dbReference type="FunCoup" id="Q6NY15">
    <property type="interactions" value="219"/>
</dbReference>
<dbReference type="IntAct" id="Q6NY15">
    <property type="interactions" value="2"/>
</dbReference>
<dbReference type="MINT" id="Q6NY15"/>
<dbReference type="STRING" id="10090.ENSMUSP00000048859"/>
<dbReference type="iPTMnet" id="Q6NY15"/>
<dbReference type="PhosphoSitePlus" id="Q6NY15"/>
<dbReference type="PaxDb" id="10090-ENSMUSP00000048859"/>
<dbReference type="PeptideAtlas" id="Q6NY15"/>
<dbReference type="ProteomicsDB" id="300043">
    <molecule id="Q6NY15-1"/>
</dbReference>
<dbReference type="ProteomicsDB" id="300044">
    <molecule id="Q6NY15-2"/>
</dbReference>
<dbReference type="ProteomicsDB" id="300045">
    <molecule id="Q6NY15-3"/>
</dbReference>
<dbReference type="Antibodypedia" id="32767">
    <property type="antibodies" value="140 antibodies from 20 providers"/>
</dbReference>
<dbReference type="DNASU" id="211484"/>
<dbReference type="Ensembl" id="ENSMUST00000041815.15">
    <molecule id="Q6NY15-1"/>
    <property type="protein sequence ID" value="ENSMUSP00000048859.9"/>
    <property type="gene ID" value="ENSMUSG00000060771.16"/>
</dbReference>
<dbReference type="Ensembl" id="ENSMUST00000088072.10">
    <molecule id="Q6NY15-3"/>
    <property type="protein sequence ID" value="ENSMUSP00000085391.4"/>
    <property type="gene ID" value="ENSMUSG00000060771.16"/>
</dbReference>
<dbReference type="Ensembl" id="ENSMUST00000114902.8">
    <molecule id="Q6NY15-2"/>
    <property type="protein sequence ID" value="ENSMUSP00000110552.2"/>
    <property type="gene ID" value="ENSMUSG00000060771.16"/>
</dbReference>
<dbReference type="GeneID" id="211484"/>
<dbReference type="KEGG" id="mmu:211484"/>
<dbReference type="UCSC" id="uc007arz.2">
    <molecule id="Q6NY15-1"/>
    <property type="organism name" value="mouse"/>
</dbReference>
<dbReference type="UCSC" id="uc007asb.1">
    <molecule id="Q6NY15-3"/>
    <property type="organism name" value="mouse"/>
</dbReference>
<dbReference type="AGR" id="MGI:2685063"/>
<dbReference type="CTD" id="80705"/>
<dbReference type="MGI" id="MGI:2685063">
    <property type="gene designation" value="Tsga10"/>
</dbReference>
<dbReference type="VEuPathDB" id="HostDB:ENSMUSG00000060771"/>
<dbReference type="eggNOG" id="ENOG502RJHC">
    <property type="taxonomic scope" value="Eukaryota"/>
</dbReference>
<dbReference type="GeneTree" id="ENSGT00940000159205"/>
<dbReference type="HOGENOM" id="CLU_008607_2_1_1"/>
<dbReference type="InParanoid" id="Q6NY15"/>
<dbReference type="PhylomeDB" id="Q6NY15"/>
<dbReference type="TreeFam" id="TF326518"/>
<dbReference type="BioGRID-ORCS" id="211484">
    <property type="hits" value="2 hits in 77 CRISPR screens"/>
</dbReference>
<dbReference type="ChiTaRS" id="Tsga10">
    <property type="organism name" value="mouse"/>
</dbReference>
<dbReference type="PRO" id="PR:Q6NY15"/>
<dbReference type="Proteomes" id="UP000000589">
    <property type="component" value="Chromosome 1"/>
</dbReference>
<dbReference type="RNAct" id="Q6NY15">
    <property type="molecule type" value="protein"/>
</dbReference>
<dbReference type="Bgee" id="ENSMUSG00000060771">
    <property type="expression patterns" value="Expressed in spermatid and 213 other cell types or tissues"/>
</dbReference>
<dbReference type="ExpressionAtlas" id="Q6NY15">
    <property type="expression patterns" value="baseline and differential"/>
</dbReference>
<dbReference type="GO" id="GO:0005814">
    <property type="term" value="C:centriole"/>
    <property type="evidence" value="ECO:0007669"/>
    <property type="project" value="UniProtKB-SubCell"/>
</dbReference>
<dbReference type="GO" id="GO:0005737">
    <property type="term" value="C:cytoplasm"/>
    <property type="evidence" value="ECO:0000314"/>
    <property type="project" value="MGI"/>
</dbReference>
<dbReference type="GO" id="GO:0031514">
    <property type="term" value="C:motile cilium"/>
    <property type="evidence" value="ECO:0000314"/>
    <property type="project" value="MGI"/>
</dbReference>
<dbReference type="GO" id="GO:0043005">
    <property type="term" value="C:neuron projection"/>
    <property type="evidence" value="ECO:0000314"/>
    <property type="project" value="MGI"/>
</dbReference>
<dbReference type="GO" id="GO:0035686">
    <property type="term" value="C:sperm fibrous sheath"/>
    <property type="evidence" value="ECO:0000314"/>
    <property type="project" value="MGI"/>
</dbReference>
<dbReference type="GO" id="GO:0097228">
    <property type="term" value="C:sperm principal piece"/>
    <property type="evidence" value="ECO:0000314"/>
    <property type="project" value="MGI"/>
</dbReference>
<dbReference type="GO" id="GO:0005198">
    <property type="term" value="F:structural molecule activity"/>
    <property type="evidence" value="ECO:0000266"/>
    <property type="project" value="MGI"/>
</dbReference>
<dbReference type="GO" id="GO:0030031">
    <property type="term" value="P:cell projection assembly"/>
    <property type="evidence" value="ECO:0000315"/>
    <property type="project" value="MGI"/>
</dbReference>
<dbReference type="InterPro" id="IPR051877">
    <property type="entry name" value="Centriole_BasalBody_StrucProt"/>
</dbReference>
<dbReference type="PANTHER" id="PTHR20544">
    <property type="entry name" value="CENTROSOMAL PROTEIN CEP135"/>
    <property type="match status" value="1"/>
</dbReference>
<dbReference type="PANTHER" id="PTHR20544:SF2">
    <property type="entry name" value="TESTIS SPECIFIC 10"/>
    <property type="match status" value="1"/>
</dbReference>
<dbReference type="SUPFAM" id="SSF57997">
    <property type="entry name" value="Tropomyosin"/>
    <property type="match status" value="1"/>
</dbReference>
<proteinExistence type="evidence at protein level"/>
<gene>
    <name type="primary">Tsga10</name>
</gene>
<protein>
    <recommendedName>
        <fullName>Testis-specific gene 10 protein</fullName>
    </recommendedName>
</protein>
<evidence type="ECO:0000250" key="1">
    <source>
        <dbReference type="UniProtKB" id="Q9BZW7"/>
    </source>
</evidence>
<evidence type="ECO:0000250" key="2">
    <source>
        <dbReference type="UniProtKB" id="Q9Z220"/>
    </source>
</evidence>
<evidence type="ECO:0000256" key="3">
    <source>
        <dbReference type="SAM" id="MobiDB-lite"/>
    </source>
</evidence>
<evidence type="ECO:0000269" key="4">
    <source>
    </source>
</evidence>
<evidence type="ECO:0000269" key="5">
    <source>
    </source>
</evidence>
<evidence type="ECO:0000269" key="6">
    <source>
    </source>
</evidence>
<evidence type="ECO:0000303" key="7">
    <source>
    </source>
</evidence>
<evidence type="ECO:0000303" key="8">
    <source>
    </source>
</evidence>
<evidence type="ECO:0000305" key="9"/>
<sequence length="697" mass="81262">MMRNRSKSPRRPSPTSRAANCDVELLKSTARDREELKCMLEKYERHLAEIQGNVKVLTSERDKTFLLYEQAQEEIARLRREMMKSCKSPKSTTAHAILRRVETERDVAFTDLRRMTTERDSLRERLKIAQETAFNEKAHLEQRIEELECTVHNLDDERMEQMANMTLMKETITTVEKEMKSLARKAMDTESELGRQKAENNSLRLLYENTEKDLSDTQRHLAKKKYELQLTQEKIMCLDEKIDNFTRQNIAQREEISILGATLNDLAKEKECLQACLDKKSENIASLGESLAMKEKTISGMKNIIAEMEQASRQSTEALIMCEQDISRMRRQLDETNDELGQIARERDILAHENDNLQEQFAKVKQENQALSKKLNDTHNELSDIKQKVQDTNLEVNKLKNILKSEESENRQIMEQLRKANEDAENWENKARQTEAENNTLKLELITAEAEGNRLKEKVDALNREVEQHLNAERSYKSQIATLHKSLVKMEEELQKVQFEKVSALADLSSTRELCIKLDSSKELLNRQLVAKDQEIEMMENELDSARSEIELLRSQMTNERISMQNLEALLVANRDKEYQSQIALQEKESEIQLLKEHLCLAENKMAIQSRDVAQFRNVVTQLEADLDITKRQLGTERFERERAVQELRRQNYSSNAYNLGPMKPNTKCHSPERAHHRSPDRGLDRSLEENLCYRDF</sequence>
<accession>Q6NY15</accession>
<accession>Q68RJ4</accession>
<accession>Q8K3V2</accession>
<name>TSG10_MOUSE</name>
<organism>
    <name type="scientific">Mus musculus</name>
    <name type="common">Mouse</name>
    <dbReference type="NCBI Taxonomy" id="10090"/>
    <lineage>
        <taxon>Eukaryota</taxon>
        <taxon>Metazoa</taxon>
        <taxon>Chordata</taxon>
        <taxon>Craniata</taxon>
        <taxon>Vertebrata</taxon>
        <taxon>Euteleostomi</taxon>
        <taxon>Mammalia</taxon>
        <taxon>Eutheria</taxon>
        <taxon>Euarchontoglires</taxon>
        <taxon>Glires</taxon>
        <taxon>Rodentia</taxon>
        <taxon>Myomorpha</taxon>
        <taxon>Muroidea</taxon>
        <taxon>Muridae</taxon>
        <taxon>Murinae</taxon>
        <taxon>Mus</taxon>
        <taxon>Mus</taxon>
    </lineage>
</organism>
<reference key="1">
    <citation type="journal article" date="2004" name="Biol. Reprod.">
        <title>Tsga10 encodes a 65-kilodalton protein that is processed to the 27-kilodalton fibrous sheath protein.</title>
        <authorList>
            <person name="Modarressi M.H."/>
            <person name="Behnam B."/>
            <person name="Cheng M."/>
            <person name="Taylor K.E."/>
            <person name="Wolfe J."/>
            <person name="van der Hoorn F.A."/>
        </authorList>
    </citation>
    <scope>NUCLEOTIDE SEQUENCE [MRNA] (ISOFORM 2)</scope>
    <scope>TISSUE SPECIFICITY</scope>
    <scope>PROTEOLYTIC PROCESSING</scope>
    <scope>FUNCTION</scope>
</reference>
<reference key="2">
    <citation type="journal article" date="2006" name="Biochem. Biophys. Res. Commun.">
        <title>Expression of Tsga10 sperm tail protein in embryogenesis and neural development: from cilium to cell division.</title>
        <authorList>
            <person name="Behnam B."/>
            <person name="Modarressi M.H."/>
            <person name="Conti V."/>
            <person name="Taylor K.E."/>
            <person name="Puliti A."/>
            <person name="Wolfe J."/>
        </authorList>
    </citation>
    <scope>NUCLEOTIDE SEQUENCE [MRNA] (ISOFORM 3)</scope>
    <scope>SUBCELLULAR LOCATION</scope>
    <scope>TISSUE SPECIFICITY</scope>
    <scope>DEVELOPMENTAL STAGE</scope>
</reference>
<reference key="3">
    <citation type="journal article" date="2004" name="Genome Res.">
        <title>The status, quality, and expansion of the NIH full-length cDNA project: the Mammalian Gene Collection (MGC).</title>
        <authorList>
            <consortium name="The MGC Project Team"/>
        </authorList>
    </citation>
    <scope>NUCLEOTIDE SEQUENCE [LARGE SCALE MRNA] (ISOFORM 1)</scope>
    <source>
        <tissue>Testis</tissue>
    </source>
</reference>
<reference key="4">
    <citation type="submission" date="2009-01" db="UniProtKB">
        <authorList>
            <person name="Lubec G."/>
            <person name="Sunyer B."/>
            <person name="Chen W.-Q."/>
        </authorList>
    </citation>
    <scope>PROTEIN SEQUENCE OF 562-575</scope>
    <scope>IDENTIFICATION BY MASS SPECTROMETRY</scope>
    <source>
        <strain>OF1</strain>
        <tissue>Hippocampus</tissue>
    </source>
</reference>
<reference key="5">
    <citation type="journal article" date="2006" name="FEBS Lett.">
        <title>TSGA10 prevents nuclear localization of the hypoxia-inducible factor (HIF)-1alpha.</title>
        <authorList>
            <person name="Haegele S."/>
            <person name="Behnam B."/>
            <person name="Borter E."/>
            <person name="Wolfe J."/>
            <person name="Paasch U."/>
            <person name="Lukashev D."/>
            <person name="Sitkovsky M."/>
            <person name="Wenger R.H."/>
            <person name="Katschinski D.M."/>
        </authorList>
    </citation>
    <scope>FUNCTION</scope>
    <scope>INTERACTION WITH HIF1A</scope>
    <scope>SUBCELLULAR LOCATION</scope>
</reference>
<reference key="6">
    <citation type="journal article" date="2010" name="Cell">
        <title>A tissue-specific atlas of mouse protein phosphorylation and expression.</title>
        <authorList>
            <person name="Huttlin E.L."/>
            <person name="Jedrychowski M.P."/>
            <person name="Elias J.E."/>
            <person name="Goswami T."/>
            <person name="Rad R."/>
            <person name="Beausoleil S.A."/>
            <person name="Villen J."/>
            <person name="Haas W."/>
            <person name="Sowa M.E."/>
            <person name="Gygi S.P."/>
        </authorList>
    </citation>
    <scope>IDENTIFICATION BY MASS SPECTROMETRY [LARGE SCALE ANALYSIS]</scope>
    <source>
        <tissue>Testis</tissue>
    </source>
</reference>
<feature type="chain" id="PRO_0000307128" description="Testis-specific gene 10 protein">
    <location>
        <begin position="1"/>
        <end position="697"/>
    </location>
</feature>
<feature type="region of interest" description="Interaction with HIF1A" evidence="6">
    <location>
        <begin position="556"/>
        <end position="688"/>
    </location>
</feature>
<feature type="region of interest" description="Disordered" evidence="3">
    <location>
        <begin position="656"/>
        <end position="684"/>
    </location>
</feature>
<feature type="compositionally biased region" description="Basic and acidic residues" evidence="3">
    <location>
        <begin position="670"/>
        <end position="684"/>
    </location>
</feature>
<feature type="modified residue" description="Phosphoserine" evidence="2">
    <location>
        <position position="687"/>
    </location>
</feature>
<feature type="splice variant" id="VSP_028579" description="In isoform 3." evidence="8">
    <location>
        <begin position="469"/>
        <end position="538"/>
    </location>
</feature>
<feature type="splice variant" id="VSP_028580" description="In isoform 2 and isoform 3." evidence="7 8">
    <location>
        <begin position="691"/>
        <end position="697"/>
    </location>
</feature>
<feature type="sequence conflict" description="In Ref. 1; AAN01136 and 2; AAT68665." evidence="9" ref="1 2">
    <original>END</original>
    <variation>QNT</variation>
    <location>
        <begin position="353"/>
        <end position="355"/>
    </location>
</feature>
<feature type="sequence conflict" description="In Ref. 1; AAN01136 and 2; AAT68665." evidence="9" ref="1 2">
    <location>
        <position position="647"/>
    </location>
</feature>
<feature type="sequence conflict" description="In Ref. 1; AAN01136 and 2; AAT68665." evidence="9" ref="1 2">
    <original>L</original>
    <variation>F</variation>
    <location>
        <position position="660"/>
    </location>
</feature>
<keyword id="KW-0025">Alternative splicing</keyword>
<keyword id="KW-0963">Cytoplasm</keyword>
<keyword id="KW-0206">Cytoskeleton</keyword>
<keyword id="KW-0903">Direct protein sequencing</keyword>
<keyword id="KW-0597">Phosphoprotein</keyword>
<keyword id="KW-1185">Reference proteome</keyword>
<comment type="function">
    <text evidence="4 6">Plays a role in spermatogenesis (PubMed:14585816). When overexpressed, prevents nuclear localization of HIF1A (PubMed:16777103).</text>
</comment>
<comment type="subunit">
    <text evidence="6">Interacts with HIF1A.</text>
</comment>
<comment type="interaction">
    <interactant intactId="EBI-8549230">
        <id>Q6NY15</id>
    </interactant>
    <interactant intactId="EBI-8549331">
        <id>Q61221-1</id>
        <label>Hif1a</label>
    </interactant>
    <organismsDiffer>false</organismsDiffer>
    <experiments>2</experiments>
</comment>
<comment type="subcellular location">
    <subcellularLocation>
        <location evidence="2">Cytoplasm</location>
    </subcellularLocation>
    <subcellularLocation>
        <location evidence="1">Cytoplasm</location>
        <location evidence="1">Cytoskeleton</location>
        <location evidence="1">Microtubule organizing center</location>
        <location evidence="1">Centrosome</location>
        <location evidence="1">Centriole</location>
    </subcellularLocation>
    <text evidence="1 2 5 6">In mature spermatozoa, localizes to the centriole and midpiece (By similarity). The 27-kDa peptide associates with the fibrous sheath in mature spermatozoa and localizes to the principal piece of sperm tail, while the 55-kDa peptide localizes to the midpiece (PubMed:16643851, PubMed:16777103). Detected in the cytoplasm of almost all spermatogonial cells within the seminiferous tubules (By similarity).</text>
</comment>
<comment type="alternative products">
    <event type="alternative splicing"/>
    <isoform>
        <id>Q6NY15-1</id>
        <name>1</name>
        <sequence type="displayed"/>
    </isoform>
    <isoform>
        <id>Q6NY15-2</id>
        <name>2</name>
        <sequence type="described" ref="VSP_028580"/>
    </isoform>
    <isoform>
        <id>Q6NY15-3</id>
        <name>3</name>
        <sequence type="described" ref="VSP_028579 VSP_028580"/>
    </isoform>
</comment>
<comment type="tissue specificity">
    <text evidence="4 5">Predominantly expressed in testis, in spermatozoa (at protein level) (PubMed:14585816, PubMed:16643851). Not detected in Leydig cells (PubMed:16643851). The N-terminal 27-kDa fragment is also detected in liver, while the C-terminal 55-kDa fragment is also found retina, brain and kidney (at protein level) (PubMed:16643851).</text>
</comment>
<comment type="developmental stage">
    <text evidence="5">First detected at 7.5 dpc (PubMed:16643851). Tends to be expressed weakly during the early stages of embryogenesis. Expression increases over time in different growing and differentiating tissues, including brain (11.5 dpc), vertebrae (14.5 dpc), primordia of vibrissae follicle (15.5 dpc), intestinal sub-endothelium (16.5 dpc), pancreas (16.5 dpc), eyeball (16.5 dpc), liver (16.5 dpc), telencephalon (18.5 dpc) (PubMed:16643851). In the developing neural tube at 8.5-9.0 dpc, preferentially expressed in cells with one or more neuronal extensions (PubMed:16643851). During spermatogenesis, weakly detected in primary spermatocytes, but expression increases, reaching strong levels in elongated spermatids (stage V) and mature sperm (at protein level) (PubMed:16643851).</text>
</comment>
<comment type="PTM">
    <text evidence="4">Processed into N-terminal 27-kDa and C-terminal 55-kDa fragments.</text>
</comment>
<comment type="similarity">
    <text evidence="9">Belongs to the CEP135/TSGA10 family.</text>
</comment>